<accession>Q9S728</accession>
<reference key="1">
    <citation type="journal article" date="1999" name="Plant Cell Physiol.">
        <title>Cloning and characterization of an L1 layer-specific gene in Arabidopsis thaliana.</title>
        <authorList>
            <person name="Abe M."/>
            <person name="Takahashi T."/>
            <person name="Komeda Y."/>
        </authorList>
    </citation>
    <scope>NUCLEOTIDE SEQUENCE [GENOMIC DNA / MRNA]</scope>
    <scope>TISSUE SPECIFICITY</scope>
    <source>
        <strain>cv. Columbia</strain>
        <tissue>Meristem</tissue>
    </source>
</reference>
<reference key="2">
    <citation type="journal article" date="1999" name="Nature">
        <title>Sequence and analysis of chromosome 2 of the plant Arabidopsis thaliana.</title>
        <authorList>
            <person name="Lin X."/>
            <person name="Kaul S."/>
            <person name="Rounsley S.D."/>
            <person name="Shea T.P."/>
            <person name="Benito M.-I."/>
            <person name="Town C.D."/>
            <person name="Fujii C.Y."/>
            <person name="Mason T.M."/>
            <person name="Bowman C.L."/>
            <person name="Barnstead M.E."/>
            <person name="Feldblyum T.V."/>
            <person name="Buell C.R."/>
            <person name="Ketchum K.A."/>
            <person name="Lee J.J."/>
            <person name="Ronning C.M."/>
            <person name="Koo H.L."/>
            <person name="Moffat K.S."/>
            <person name="Cronin L.A."/>
            <person name="Shen M."/>
            <person name="Pai G."/>
            <person name="Van Aken S."/>
            <person name="Umayam L."/>
            <person name="Tallon L.J."/>
            <person name="Gill J.E."/>
            <person name="Adams M.D."/>
            <person name="Carrera A.J."/>
            <person name="Creasy T.H."/>
            <person name="Goodman H.M."/>
            <person name="Somerville C.R."/>
            <person name="Copenhaver G.P."/>
            <person name="Preuss D."/>
            <person name="Nierman W.C."/>
            <person name="White O."/>
            <person name="Eisen J.A."/>
            <person name="Salzberg S.L."/>
            <person name="Fraser C.M."/>
            <person name="Venter J.C."/>
        </authorList>
    </citation>
    <scope>NUCLEOTIDE SEQUENCE [LARGE SCALE GENOMIC DNA]</scope>
    <source>
        <strain>cv. Columbia</strain>
    </source>
</reference>
<reference key="3">
    <citation type="journal article" date="2017" name="Plant J.">
        <title>Araport11: a complete reannotation of the Arabidopsis thaliana reference genome.</title>
        <authorList>
            <person name="Cheng C.Y."/>
            <person name="Krishnakumar V."/>
            <person name="Chan A.P."/>
            <person name="Thibaud-Nissen F."/>
            <person name="Schobel S."/>
            <person name="Town C.D."/>
        </authorList>
    </citation>
    <scope>GENOME REANNOTATION</scope>
    <source>
        <strain>cv. Columbia</strain>
    </source>
</reference>
<reference key="4">
    <citation type="submission" date="2006-03" db="EMBL/GenBank/DDBJ databases">
        <title>Arabidopsis ORF clones.</title>
        <authorList>
            <person name="Shinn P."/>
            <person name="Chen H."/>
            <person name="Kim C.J."/>
            <person name="Ecker J.R."/>
        </authorList>
    </citation>
    <scope>NUCLEOTIDE SEQUENCE [LARGE SCALE MRNA]</scope>
    <source>
        <strain>cv. Columbia</strain>
    </source>
</reference>
<reference key="5">
    <citation type="submission" date="2002-03" db="EMBL/GenBank/DDBJ databases">
        <title>Full-length cDNA from Arabidopsis thaliana.</title>
        <authorList>
            <person name="Brover V.V."/>
            <person name="Troukhan M.E."/>
            <person name="Alexandrov N.A."/>
            <person name="Lu Y.-P."/>
            <person name="Flavell R.B."/>
            <person name="Feldmann K.A."/>
        </authorList>
    </citation>
    <scope>NUCLEOTIDE SEQUENCE [LARGE SCALE MRNA]</scope>
</reference>
<reference key="6">
    <citation type="journal article" date="2001" name="Plant J.">
        <title>Identification of a cis-regulatory element for L1 layer-specific gene expression, which is targeted by an L1-specific homeodomain protein.</title>
        <authorList>
            <person name="Abe M."/>
            <person name="Takahashi T."/>
            <person name="Komeda Y."/>
        </authorList>
    </citation>
    <scope>TISSUE SPECIFICITY</scope>
    <source>
        <strain>cv. Columbia</strain>
    </source>
</reference>
<reference key="7">
    <citation type="journal article" date="2007" name="Development">
        <title>Novel receptor-like kinase ALE2 controls shoot development by specifying epidermis in Arabidopsis.</title>
        <authorList>
            <person name="Tanaka H."/>
            <person name="Watanabe M."/>
            <person name="Sasabe M."/>
            <person name="Hiroe T."/>
            <person name="Tanaka T."/>
            <person name="Tsukaya H."/>
            <person name="Ikezaki M."/>
            <person name="Machida C."/>
            <person name="Machida Y."/>
        </authorList>
    </citation>
    <scope>TISSUE SPECIFICITY</scope>
</reference>
<gene>
    <name type="primary">PDF1</name>
    <name type="ordered locus">At2g42840</name>
    <name type="ORF">F7D19.16</name>
</gene>
<feature type="signal peptide" evidence="1">
    <location>
        <begin position="1"/>
        <end position="23"/>
    </location>
</feature>
<feature type="chain" id="PRO_0000420769" description="Protodermal factor 1">
    <location>
        <begin position="24"/>
        <end position="306"/>
    </location>
</feature>
<feature type="region of interest" description="Disordered" evidence="2">
    <location>
        <begin position="40"/>
        <end position="156"/>
    </location>
</feature>
<feature type="compositionally biased region" description="Low complexity" evidence="2">
    <location>
        <begin position="40"/>
        <end position="56"/>
    </location>
</feature>
<feature type="compositionally biased region" description="Pro residues" evidence="2">
    <location>
        <begin position="62"/>
        <end position="83"/>
    </location>
</feature>
<feature type="compositionally biased region" description="Low complexity" evidence="2">
    <location>
        <begin position="84"/>
        <end position="99"/>
    </location>
</feature>
<feature type="compositionally biased region" description="Pro residues" evidence="2">
    <location>
        <begin position="139"/>
        <end position="154"/>
    </location>
</feature>
<proteinExistence type="evidence at transcript level"/>
<name>PDF1_ARATH</name>
<keyword id="KW-1185">Reference proteome</keyword>
<keyword id="KW-0732">Signal</keyword>
<comment type="function">
    <text evidence="6">May be involved in the regulation of meristem growth.</text>
</comment>
<comment type="tissue specificity">
    <text evidence="3 4 5">Confined to the shoot apical meristem (SAM) at the layer L1 in vegetative, infloresence and floral meristems, as well as in protoderm of organ primordia, including during embryogenesis. Also present in the tip of emerging lateral root primordia.</text>
</comment>
<protein>
    <recommendedName>
        <fullName>Protodermal factor 1</fullName>
    </recommendedName>
</protein>
<evidence type="ECO:0000255" key="1"/>
<evidence type="ECO:0000256" key="2">
    <source>
        <dbReference type="SAM" id="MobiDB-lite"/>
    </source>
</evidence>
<evidence type="ECO:0000269" key="3">
    <source>
    </source>
</evidence>
<evidence type="ECO:0000269" key="4">
    <source>
    </source>
</evidence>
<evidence type="ECO:0000269" key="5">
    <source>
    </source>
</evidence>
<evidence type="ECO:0000305" key="6"/>
<dbReference type="EMBL" id="AF141375">
    <property type="protein sequence ID" value="AAD33868.1"/>
    <property type="molecule type" value="mRNA"/>
</dbReference>
<dbReference type="EMBL" id="AF141376">
    <property type="protein sequence ID" value="AAD33869.1"/>
    <property type="molecule type" value="Genomic_DNA"/>
</dbReference>
<dbReference type="EMBL" id="AC006931">
    <property type="protein sequence ID" value="AAD21725.1"/>
    <property type="molecule type" value="Genomic_DNA"/>
</dbReference>
<dbReference type="EMBL" id="CP002685">
    <property type="protein sequence ID" value="AEC10176.1"/>
    <property type="molecule type" value="Genomic_DNA"/>
</dbReference>
<dbReference type="EMBL" id="BT024781">
    <property type="protein sequence ID" value="ABD59119.1"/>
    <property type="molecule type" value="mRNA"/>
</dbReference>
<dbReference type="EMBL" id="AY088094">
    <property type="protein sequence ID" value="AAM65640.1"/>
    <property type="molecule type" value="mRNA"/>
</dbReference>
<dbReference type="PIR" id="T52305">
    <property type="entry name" value="T52305"/>
</dbReference>
<dbReference type="RefSeq" id="NP_181812.1">
    <property type="nucleotide sequence ID" value="NM_129845.4"/>
</dbReference>
<dbReference type="FunCoup" id="Q9S728">
    <property type="interactions" value="30"/>
</dbReference>
<dbReference type="STRING" id="3702.Q9S728"/>
<dbReference type="GlyGen" id="Q9S728">
    <property type="glycosylation" value="4 sites"/>
</dbReference>
<dbReference type="PaxDb" id="3702-AT2G42840.1"/>
<dbReference type="ProteomicsDB" id="236805"/>
<dbReference type="EnsemblPlants" id="AT2G42840.1">
    <property type="protein sequence ID" value="AT2G42840.1"/>
    <property type="gene ID" value="AT2G42840"/>
</dbReference>
<dbReference type="GeneID" id="818884"/>
<dbReference type="Gramene" id="AT2G42840.1">
    <property type="protein sequence ID" value="AT2G42840.1"/>
    <property type="gene ID" value="AT2G42840"/>
</dbReference>
<dbReference type="KEGG" id="ath:AT2G42840"/>
<dbReference type="Araport" id="AT2G42840"/>
<dbReference type="TAIR" id="AT2G42840">
    <property type="gene designation" value="PDF1"/>
</dbReference>
<dbReference type="eggNOG" id="ENOG502QVEX">
    <property type="taxonomic scope" value="Eukaryota"/>
</dbReference>
<dbReference type="HOGENOM" id="CLU_057405_0_0_1"/>
<dbReference type="InParanoid" id="Q9S728"/>
<dbReference type="OMA" id="PSHGSYN"/>
<dbReference type="OrthoDB" id="696797at2759"/>
<dbReference type="PRO" id="PR:Q9S728"/>
<dbReference type="Proteomes" id="UP000006548">
    <property type="component" value="Chromosome 2"/>
</dbReference>
<dbReference type="ExpressionAtlas" id="Q9S728">
    <property type="expression patterns" value="baseline and differential"/>
</dbReference>
<dbReference type="GO" id="GO:0005576">
    <property type="term" value="C:extracellular region"/>
    <property type="evidence" value="ECO:0000304"/>
    <property type="project" value="TAIR"/>
</dbReference>
<dbReference type="InterPro" id="IPR039923">
    <property type="entry name" value="Protodermal_1"/>
</dbReference>
<dbReference type="PANTHER" id="PTHR33210">
    <property type="entry name" value="PROTODERMAL FACTOR 1"/>
    <property type="match status" value="1"/>
</dbReference>
<dbReference type="PANTHER" id="PTHR33210:SF18">
    <property type="entry name" value="PROTODERMAL FACTOR 1"/>
    <property type="match status" value="1"/>
</dbReference>
<dbReference type="PRINTS" id="PR01217">
    <property type="entry name" value="PRICHEXTENSN"/>
</dbReference>
<sequence length="306" mass="32227">MRGMVSFAVWALFAALLSQQLFASVASVRFEDAKTYYLSPPSGSHGTPPSHTPPSSNCGSPPYDPSPSTPSHPSPPSHTPTPSTPSHTPTPHTPSHTPTPHTPPCNCGSPPSHPSTPSHPSTPSHPTPSHPPSGGYYSSPPPRTPVVVTPPSPIVDPGTPIIGGSPPTPIIDPGTPGTPFIPAPFPPITGTCDYWRNHPTLIWGLLGWWGTVGGAFGTVSIPSSIPGFDPHMNLLQALSNTRSDPIGALYREGTASWLNSMVNHKFPFTTPQVRDHFVAGLSSNKAATKQAHTFKLANEGRLKPRV</sequence>
<organism>
    <name type="scientific">Arabidopsis thaliana</name>
    <name type="common">Mouse-ear cress</name>
    <dbReference type="NCBI Taxonomy" id="3702"/>
    <lineage>
        <taxon>Eukaryota</taxon>
        <taxon>Viridiplantae</taxon>
        <taxon>Streptophyta</taxon>
        <taxon>Embryophyta</taxon>
        <taxon>Tracheophyta</taxon>
        <taxon>Spermatophyta</taxon>
        <taxon>Magnoliopsida</taxon>
        <taxon>eudicotyledons</taxon>
        <taxon>Gunneridae</taxon>
        <taxon>Pentapetalae</taxon>
        <taxon>rosids</taxon>
        <taxon>malvids</taxon>
        <taxon>Brassicales</taxon>
        <taxon>Brassicaceae</taxon>
        <taxon>Camelineae</taxon>
        <taxon>Arabidopsis</taxon>
    </lineage>
</organism>